<keyword id="KW-0479">Metal-binding</keyword>
<keyword id="KW-1185">Reference proteome</keyword>
<keyword id="KW-0862">Zinc</keyword>
<gene>
    <name evidence="1" type="primary">yacG</name>
    <name type="ordered locus">ETA_07960</name>
</gene>
<comment type="function">
    <text evidence="1">Inhibits all the catalytic activities of DNA gyrase by preventing its interaction with DNA. Acts by binding directly to the C-terminal domain of GyrB, which probably disrupts DNA binding by the gyrase.</text>
</comment>
<comment type="cofactor">
    <cofactor evidence="1">
        <name>Zn(2+)</name>
        <dbReference type="ChEBI" id="CHEBI:29105"/>
    </cofactor>
    <text evidence="1">Binds 1 zinc ion.</text>
</comment>
<comment type="subunit">
    <text evidence="1">Interacts with GyrB.</text>
</comment>
<comment type="similarity">
    <text evidence="1">Belongs to the DNA gyrase inhibitor YacG family.</text>
</comment>
<accession>B2VD52</accession>
<feature type="chain" id="PRO_1000130963" description="DNA gyrase inhibitor YacG">
    <location>
        <begin position="1"/>
        <end position="67"/>
    </location>
</feature>
<feature type="region of interest" description="Disordered" evidence="2">
    <location>
        <begin position="46"/>
        <end position="67"/>
    </location>
</feature>
<feature type="binding site" evidence="1">
    <location>
        <position position="9"/>
    </location>
    <ligand>
        <name>Zn(2+)</name>
        <dbReference type="ChEBI" id="CHEBI:29105"/>
    </ligand>
</feature>
<feature type="binding site" evidence="1">
    <location>
        <position position="12"/>
    </location>
    <ligand>
        <name>Zn(2+)</name>
        <dbReference type="ChEBI" id="CHEBI:29105"/>
    </ligand>
</feature>
<feature type="binding site" evidence="1">
    <location>
        <position position="28"/>
    </location>
    <ligand>
        <name>Zn(2+)</name>
        <dbReference type="ChEBI" id="CHEBI:29105"/>
    </ligand>
</feature>
<feature type="binding site" evidence="1">
    <location>
        <position position="32"/>
    </location>
    <ligand>
        <name>Zn(2+)</name>
        <dbReference type="ChEBI" id="CHEBI:29105"/>
    </ligand>
</feature>
<proteinExistence type="inferred from homology"/>
<dbReference type="EMBL" id="CU468135">
    <property type="protein sequence ID" value="CAO95842.1"/>
    <property type="molecule type" value="Genomic_DNA"/>
</dbReference>
<dbReference type="RefSeq" id="WP_012440544.1">
    <property type="nucleotide sequence ID" value="NC_010694.1"/>
</dbReference>
<dbReference type="SMR" id="B2VD52"/>
<dbReference type="STRING" id="465817.ETA_07960"/>
<dbReference type="KEGG" id="eta:ETA_07960"/>
<dbReference type="eggNOG" id="COG3024">
    <property type="taxonomic scope" value="Bacteria"/>
</dbReference>
<dbReference type="HOGENOM" id="CLU_178280_3_1_6"/>
<dbReference type="OrthoDB" id="9809663at2"/>
<dbReference type="Proteomes" id="UP000001726">
    <property type="component" value="Chromosome"/>
</dbReference>
<dbReference type="GO" id="GO:0008657">
    <property type="term" value="F:DNA topoisomerase type II (double strand cut, ATP-hydrolyzing) inhibitor activity"/>
    <property type="evidence" value="ECO:0007669"/>
    <property type="project" value="UniProtKB-UniRule"/>
</dbReference>
<dbReference type="GO" id="GO:0008270">
    <property type="term" value="F:zinc ion binding"/>
    <property type="evidence" value="ECO:0007669"/>
    <property type="project" value="UniProtKB-UniRule"/>
</dbReference>
<dbReference type="GO" id="GO:0006355">
    <property type="term" value="P:regulation of DNA-templated transcription"/>
    <property type="evidence" value="ECO:0007669"/>
    <property type="project" value="InterPro"/>
</dbReference>
<dbReference type="Gene3D" id="3.30.50.10">
    <property type="entry name" value="Erythroid Transcription Factor GATA-1, subunit A"/>
    <property type="match status" value="1"/>
</dbReference>
<dbReference type="HAMAP" id="MF_00649">
    <property type="entry name" value="DNA_gyrase_inhibitor_YacG"/>
    <property type="match status" value="1"/>
</dbReference>
<dbReference type="InterPro" id="IPR005584">
    <property type="entry name" value="DNA_gyrase_inhibitor_YacG"/>
</dbReference>
<dbReference type="InterPro" id="IPR013088">
    <property type="entry name" value="Znf_NHR/GATA"/>
</dbReference>
<dbReference type="NCBIfam" id="NF001638">
    <property type="entry name" value="PRK00418.1"/>
    <property type="match status" value="1"/>
</dbReference>
<dbReference type="PANTHER" id="PTHR36150">
    <property type="entry name" value="DNA GYRASE INHIBITOR YACG"/>
    <property type="match status" value="1"/>
</dbReference>
<dbReference type="PANTHER" id="PTHR36150:SF1">
    <property type="entry name" value="DNA GYRASE INHIBITOR YACG"/>
    <property type="match status" value="1"/>
</dbReference>
<dbReference type="Pfam" id="PF03884">
    <property type="entry name" value="YacG"/>
    <property type="match status" value="1"/>
</dbReference>
<dbReference type="SUPFAM" id="SSF57716">
    <property type="entry name" value="Glucocorticoid receptor-like (DNA-binding domain)"/>
    <property type="match status" value="1"/>
</dbReference>
<reference key="1">
    <citation type="journal article" date="2008" name="Environ. Microbiol.">
        <title>The genome of Erwinia tasmaniensis strain Et1/99, a non-pathogenic bacterium in the genus Erwinia.</title>
        <authorList>
            <person name="Kube M."/>
            <person name="Migdoll A.M."/>
            <person name="Mueller I."/>
            <person name="Kuhl H."/>
            <person name="Beck A."/>
            <person name="Reinhardt R."/>
            <person name="Geider K."/>
        </authorList>
    </citation>
    <scope>NUCLEOTIDE SEQUENCE [LARGE SCALE GENOMIC DNA]</scope>
    <source>
        <strain>DSM 17950 / CFBP 7177 / CIP 109463 / NCPPB 4357 / Et1/99</strain>
    </source>
</reference>
<protein>
    <recommendedName>
        <fullName evidence="1">DNA gyrase inhibitor YacG</fullName>
    </recommendedName>
</protein>
<name>YACG_ERWT9</name>
<sequence>MNDVTVVNCPTCNKQVIWDELSTWRPFCSKRCQLIDLGEWAAEEKRIPSSGDLNDSDDWSEQPLDRQ</sequence>
<organism>
    <name type="scientific">Erwinia tasmaniensis (strain DSM 17950 / CFBP 7177 / CIP 109463 / NCPPB 4357 / Et1/99)</name>
    <dbReference type="NCBI Taxonomy" id="465817"/>
    <lineage>
        <taxon>Bacteria</taxon>
        <taxon>Pseudomonadati</taxon>
        <taxon>Pseudomonadota</taxon>
        <taxon>Gammaproteobacteria</taxon>
        <taxon>Enterobacterales</taxon>
        <taxon>Erwiniaceae</taxon>
        <taxon>Erwinia</taxon>
    </lineage>
</organism>
<evidence type="ECO:0000255" key="1">
    <source>
        <dbReference type="HAMAP-Rule" id="MF_00649"/>
    </source>
</evidence>
<evidence type="ECO:0000256" key="2">
    <source>
        <dbReference type="SAM" id="MobiDB-lite"/>
    </source>
</evidence>